<feature type="chain" id="PRO_0000369755" description="Ribosomal RNA small subunit methyltransferase C">
    <location>
        <begin position="1"/>
        <end position="342"/>
    </location>
</feature>
<accession>B5R2I6</accession>
<proteinExistence type="inferred from homology"/>
<reference key="1">
    <citation type="journal article" date="2008" name="Genome Res.">
        <title>Comparative genome analysis of Salmonella enteritidis PT4 and Salmonella gallinarum 287/91 provides insights into evolutionary and host adaptation pathways.</title>
        <authorList>
            <person name="Thomson N.R."/>
            <person name="Clayton D.J."/>
            <person name="Windhorst D."/>
            <person name="Vernikos G."/>
            <person name="Davidson S."/>
            <person name="Churcher C."/>
            <person name="Quail M.A."/>
            <person name="Stevens M."/>
            <person name="Jones M.A."/>
            <person name="Watson M."/>
            <person name="Barron A."/>
            <person name="Layton A."/>
            <person name="Pickard D."/>
            <person name="Kingsley R.A."/>
            <person name="Bignell A."/>
            <person name="Clark L."/>
            <person name="Harris B."/>
            <person name="Ormond D."/>
            <person name="Abdellah Z."/>
            <person name="Brooks K."/>
            <person name="Cherevach I."/>
            <person name="Chillingworth T."/>
            <person name="Woodward J."/>
            <person name="Norberczak H."/>
            <person name="Lord A."/>
            <person name="Arrowsmith C."/>
            <person name="Jagels K."/>
            <person name="Moule S."/>
            <person name="Mungall K."/>
            <person name="Saunders M."/>
            <person name="Whitehead S."/>
            <person name="Chabalgoity J.A."/>
            <person name="Maskell D."/>
            <person name="Humphreys T."/>
            <person name="Roberts M."/>
            <person name="Barrow P.A."/>
            <person name="Dougan G."/>
            <person name="Parkhill J."/>
        </authorList>
    </citation>
    <scope>NUCLEOTIDE SEQUENCE [LARGE SCALE GENOMIC DNA]</scope>
    <source>
        <strain>P125109</strain>
    </source>
</reference>
<keyword id="KW-0963">Cytoplasm</keyword>
<keyword id="KW-0489">Methyltransferase</keyword>
<keyword id="KW-0698">rRNA processing</keyword>
<keyword id="KW-0949">S-adenosyl-L-methionine</keyword>
<keyword id="KW-0808">Transferase</keyword>
<name>RSMC_SALEP</name>
<dbReference type="EC" id="2.1.1.172" evidence="1"/>
<dbReference type="EMBL" id="AM933172">
    <property type="protein sequence ID" value="CAR35870.1"/>
    <property type="molecule type" value="Genomic_DNA"/>
</dbReference>
<dbReference type="RefSeq" id="WP_001272276.1">
    <property type="nucleotide sequence ID" value="NC_011294.1"/>
</dbReference>
<dbReference type="SMR" id="B5R2I6"/>
<dbReference type="KEGG" id="set:SEN4318"/>
<dbReference type="HOGENOM" id="CLU_049581_0_1_6"/>
<dbReference type="Proteomes" id="UP000000613">
    <property type="component" value="Chromosome"/>
</dbReference>
<dbReference type="GO" id="GO:0005737">
    <property type="term" value="C:cytoplasm"/>
    <property type="evidence" value="ECO:0007669"/>
    <property type="project" value="UniProtKB-SubCell"/>
</dbReference>
<dbReference type="GO" id="GO:0052914">
    <property type="term" value="F:16S rRNA (guanine(1207)-N(2))-methyltransferase activity"/>
    <property type="evidence" value="ECO:0007669"/>
    <property type="project" value="UniProtKB-EC"/>
</dbReference>
<dbReference type="GO" id="GO:0003676">
    <property type="term" value="F:nucleic acid binding"/>
    <property type="evidence" value="ECO:0007669"/>
    <property type="project" value="InterPro"/>
</dbReference>
<dbReference type="CDD" id="cd02440">
    <property type="entry name" value="AdoMet_MTases"/>
    <property type="match status" value="1"/>
</dbReference>
<dbReference type="FunFam" id="3.40.50.150:FF:000058">
    <property type="entry name" value="Ribosomal RNA small subunit methyltransferase C"/>
    <property type="match status" value="1"/>
</dbReference>
<dbReference type="Gene3D" id="3.40.50.150">
    <property type="entry name" value="Vaccinia Virus protein VP39"/>
    <property type="match status" value="2"/>
</dbReference>
<dbReference type="HAMAP" id="MF_01862">
    <property type="entry name" value="16SrRNA_methyltr_C"/>
    <property type="match status" value="1"/>
</dbReference>
<dbReference type="InterPro" id="IPR002052">
    <property type="entry name" value="DNA_methylase_N6_adenine_CS"/>
</dbReference>
<dbReference type="InterPro" id="IPR013675">
    <property type="entry name" value="Mtase_sm_N"/>
</dbReference>
<dbReference type="InterPro" id="IPR023543">
    <property type="entry name" value="rRNA_ssu_MeTfrase_C"/>
</dbReference>
<dbReference type="InterPro" id="IPR046977">
    <property type="entry name" value="RsmC/RlmG"/>
</dbReference>
<dbReference type="InterPro" id="IPR029063">
    <property type="entry name" value="SAM-dependent_MTases_sf"/>
</dbReference>
<dbReference type="InterPro" id="IPR007848">
    <property type="entry name" value="Small_mtfrase_dom"/>
</dbReference>
<dbReference type="NCBIfam" id="NF007023">
    <property type="entry name" value="PRK09489.1"/>
    <property type="match status" value="1"/>
</dbReference>
<dbReference type="PANTHER" id="PTHR47816">
    <property type="entry name" value="RIBOSOMAL RNA SMALL SUBUNIT METHYLTRANSFERASE C"/>
    <property type="match status" value="1"/>
</dbReference>
<dbReference type="PANTHER" id="PTHR47816:SF4">
    <property type="entry name" value="RIBOSOMAL RNA SMALL SUBUNIT METHYLTRANSFERASE C"/>
    <property type="match status" value="1"/>
</dbReference>
<dbReference type="Pfam" id="PF05175">
    <property type="entry name" value="MTS"/>
    <property type="match status" value="1"/>
</dbReference>
<dbReference type="Pfam" id="PF08468">
    <property type="entry name" value="MTS_N"/>
    <property type="match status" value="1"/>
</dbReference>
<dbReference type="SUPFAM" id="SSF53335">
    <property type="entry name" value="S-adenosyl-L-methionine-dependent methyltransferases"/>
    <property type="match status" value="1"/>
</dbReference>
<sequence>MSAFTPASEVLLRHSDDFEQSRILFAGDLQDDLPARFECAASRAHTQQFHHWQVLSRQMGDNVRFSLVAQASDVADCDTLIYYWPKNKPEAQFQLMNILSLMPSGVDVFVVGENRSGVRSAEPMLADYAPLNKVDSARRCGLYHGRLEKQPQFSLESWWAEYNIDGLTIKTLPGVFSRDGLDVGSQLLLSTLTPHTKGKVLDVGCGAGVLSAALASHSPKVRLTLCDVSAPAVEASRATLAANGLEGEVFASNVFSEVKGRFDMIISNPPFHDGMQTSLDAAQTLIRGAVRHLNSGGELRIVANAFLPYPKILDETFGFHEVIAQTGRFKVYRTVMTRQAKK</sequence>
<evidence type="ECO:0000255" key="1">
    <source>
        <dbReference type="HAMAP-Rule" id="MF_01862"/>
    </source>
</evidence>
<comment type="function">
    <text evidence="1">Specifically methylates the guanine in position 1207 of 16S rRNA in the 30S particle.</text>
</comment>
<comment type="catalytic activity">
    <reaction evidence="1">
        <text>guanosine(1207) in 16S rRNA + S-adenosyl-L-methionine = N(2)-methylguanosine(1207) in 16S rRNA + S-adenosyl-L-homocysteine + H(+)</text>
        <dbReference type="Rhea" id="RHEA:42736"/>
        <dbReference type="Rhea" id="RHEA-COMP:10213"/>
        <dbReference type="Rhea" id="RHEA-COMP:10214"/>
        <dbReference type="ChEBI" id="CHEBI:15378"/>
        <dbReference type="ChEBI" id="CHEBI:57856"/>
        <dbReference type="ChEBI" id="CHEBI:59789"/>
        <dbReference type="ChEBI" id="CHEBI:74269"/>
        <dbReference type="ChEBI" id="CHEBI:74481"/>
        <dbReference type="EC" id="2.1.1.172"/>
    </reaction>
</comment>
<comment type="subunit">
    <text evidence="1">Monomer.</text>
</comment>
<comment type="subcellular location">
    <subcellularLocation>
        <location evidence="1">Cytoplasm</location>
    </subcellularLocation>
</comment>
<comment type="similarity">
    <text evidence="1">Belongs to the methyltransferase superfamily. RsmC family.</text>
</comment>
<gene>
    <name evidence="1" type="primary">rsmC</name>
    <name type="ordered locus">SEN4318</name>
</gene>
<protein>
    <recommendedName>
        <fullName evidence="1">Ribosomal RNA small subunit methyltransferase C</fullName>
        <ecNumber evidence="1">2.1.1.172</ecNumber>
    </recommendedName>
    <alternativeName>
        <fullName evidence="1">16S rRNA m2G1207 methyltransferase</fullName>
    </alternativeName>
    <alternativeName>
        <fullName evidence="1">rRNA (guanine-N(2)-)-methyltransferase RsmC</fullName>
    </alternativeName>
</protein>
<organism>
    <name type="scientific">Salmonella enteritidis PT4 (strain P125109)</name>
    <dbReference type="NCBI Taxonomy" id="550537"/>
    <lineage>
        <taxon>Bacteria</taxon>
        <taxon>Pseudomonadati</taxon>
        <taxon>Pseudomonadota</taxon>
        <taxon>Gammaproteobacteria</taxon>
        <taxon>Enterobacterales</taxon>
        <taxon>Enterobacteriaceae</taxon>
        <taxon>Salmonella</taxon>
    </lineage>
</organism>